<organism>
    <name type="scientific">Synechocystis sp. (strain ATCC 27184 / PCC 6803 / Kazusa)</name>
    <dbReference type="NCBI Taxonomy" id="1111708"/>
    <lineage>
        <taxon>Bacteria</taxon>
        <taxon>Bacillati</taxon>
        <taxon>Cyanobacteriota</taxon>
        <taxon>Cyanophyceae</taxon>
        <taxon>Synechococcales</taxon>
        <taxon>Merismopediaceae</taxon>
        <taxon>Synechocystis</taxon>
    </lineage>
</organism>
<feature type="chain" id="PRO_0000102223" description="Endonuclease III">
    <location>
        <begin position="1"/>
        <end position="219"/>
    </location>
</feature>
<feature type="domain" description="HhH" evidence="1">
    <location>
        <begin position="117"/>
        <end position="136"/>
    </location>
</feature>
<feature type="binding site" evidence="1">
    <location>
        <position position="197"/>
    </location>
    <ligand>
        <name>[4Fe-4S] cluster</name>
        <dbReference type="ChEBI" id="CHEBI:49883"/>
    </ligand>
</feature>
<feature type="binding site" evidence="1">
    <location>
        <position position="204"/>
    </location>
    <ligand>
        <name>[4Fe-4S] cluster</name>
        <dbReference type="ChEBI" id="CHEBI:49883"/>
    </ligand>
</feature>
<feature type="binding site" evidence="1">
    <location>
        <position position="207"/>
    </location>
    <ligand>
        <name>[4Fe-4S] cluster</name>
        <dbReference type="ChEBI" id="CHEBI:49883"/>
    </ligand>
</feature>
<feature type="binding site" evidence="1">
    <location>
        <position position="213"/>
    </location>
    <ligand>
        <name>[4Fe-4S] cluster</name>
        <dbReference type="ChEBI" id="CHEBI:49883"/>
    </ligand>
</feature>
<proteinExistence type="inferred from homology"/>
<keyword id="KW-0004">4Fe-4S</keyword>
<keyword id="KW-0227">DNA damage</keyword>
<keyword id="KW-0234">DNA repair</keyword>
<keyword id="KW-0238">DNA-binding</keyword>
<keyword id="KW-0326">Glycosidase</keyword>
<keyword id="KW-0378">Hydrolase</keyword>
<keyword id="KW-0408">Iron</keyword>
<keyword id="KW-0411">Iron-sulfur</keyword>
<keyword id="KW-0456">Lyase</keyword>
<keyword id="KW-0479">Metal-binding</keyword>
<keyword id="KW-1185">Reference proteome</keyword>
<accession>P73715</accession>
<protein>
    <recommendedName>
        <fullName evidence="1">Endonuclease III</fullName>
        <ecNumber evidence="1">4.2.99.18</ecNumber>
    </recommendedName>
    <alternativeName>
        <fullName evidence="1">DNA-(apurinic or apyrimidinic site) lyase</fullName>
    </alternativeName>
</protein>
<evidence type="ECO:0000255" key="1">
    <source>
        <dbReference type="HAMAP-Rule" id="MF_00942"/>
    </source>
</evidence>
<reference key="1">
    <citation type="journal article" date="1996" name="DNA Res.">
        <title>Sequence analysis of the genome of the unicellular cyanobacterium Synechocystis sp. strain PCC6803. II. Sequence determination of the entire genome and assignment of potential protein-coding regions.</title>
        <authorList>
            <person name="Kaneko T."/>
            <person name="Sato S."/>
            <person name="Kotani H."/>
            <person name="Tanaka A."/>
            <person name="Asamizu E."/>
            <person name="Nakamura Y."/>
            <person name="Miyajima N."/>
            <person name="Hirosawa M."/>
            <person name="Sugiura M."/>
            <person name="Sasamoto S."/>
            <person name="Kimura T."/>
            <person name="Hosouchi T."/>
            <person name="Matsuno A."/>
            <person name="Muraki A."/>
            <person name="Nakazaki N."/>
            <person name="Naruo K."/>
            <person name="Okumura S."/>
            <person name="Shimpo S."/>
            <person name="Takeuchi C."/>
            <person name="Wada T."/>
            <person name="Watanabe A."/>
            <person name="Yamada M."/>
            <person name="Yasuda M."/>
            <person name="Tabata S."/>
        </authorList>
    </citation>
    <scope>NUCLEOTIDE SEQUENCE [LARGE SCALE GENOMIC DNA]</scope>
    <source>
        <strain>ATCC 27184 / PCC 6803 / Kazusa</strain>
    </source>
</reference>
<sequence length="219" mass="24377">MSSLLRKMASKKQRATEILLILKKLYPGATCSLDYQTPVQLLVATILSAQCTDERVNKVTPALFQRYPDANALAYGDRQEIEELIHSTGFFRNKAKNIQGACRKIVEEFDGEVPQRMEELLTLPGVARKTANVVLAHAFGILAGVTVDTHVKRLSQRLGLTKATDPIRIERDLMKLIPQPDWENFSIHIIYHGRAVCAARKPLCGECQLAHLCPSAQAS</sequence>
<gene>
    <name evidence="1" type="primary">nth</name>
    <name type="ordered locus">slr1822</name>
</gene>
<dbReference type="EC" id="4.2.99.18" evidence="1"/>
<dbReference type="EMBL" id="BA000022">
    <property type="protein sequence ID" value="BAA17762.1"/>
    <property type="molecule type" value="Genomic_DNA"/>
</dbReference>
<dbReference type="PIR" id="S77204">
    <property type="entry name" value="S77204"/>
</dbReference>
<dbReference type="SMR" id="P73715"/>
<dbReference type="FunCoup" id="P73715">
    <property type="interactions" value="387"/>
</dbReference>
<dbReference type="STRING" id="1148.gene:10498629"/>
<dbReference type="PaxDb" id="1148-1652843"/>
<dbReference type="EnsemblBacteria" id="BAA17762">
    <property type="protein sequence ID" value="BAA17762"/>
    <property type="gene ID" value="BAA17762"/>
</dbReference>
<dbReference type="KEGG" id="syn:slr1822"/>
<dbReference type="eggNOG" id="COG0177">
    <property type="taxonomic scope" value="Bacteria"/>
</dbReference>
<dbReference type="InParanoid" id="P73715"/>
<dbReference type="PhylomeDB" id="P73715"/>
<dbReference type="Proteomes" id="UP000001425">
    <property type="component" value="Chromosome"/>
</dbReference>
<dbReference type="GO" id="GO:0051539">
    <property type="term" value="F:4 iron, 4 sulfur cluster binding"/>
    <property type="evidence" value="ECO:0007669"/>
    <property type="project" value="UniProtKB-UniRule"/>
</dbReference>
<dbReference type="GO" id="GO:0140078">
    <property type="term" value="F:class I DNA-(apurinic or apyrimidinic site) endonuclease activity"/>
    <property type="evidence" value="ECO:0007669"/>
    <property type="project" value="UniProtKB-EC"/>
</dbReference>
<dbReference type="GO" id="GO:0003677">
    <property type="term" value="F:DNA binding"/>
    <property type="evidence" value="ECO:0007669"/>
    <property type="project" value="UniProtKB-UniRule"/>
</dbReference>
<dbReference type="GO" id="GO:0019104">
    <property type="term" value="F:DNA N-glycosylase activity"/>
    <property type="evidence" value="ECO:0000318"/>
    <property type="project" value="GO_Central"/>
</dbReference>
<dbReference type="GO" id="GO:0046872">
    <property type="term" value="F:metal ion binding"/>
    <property type="evidence" value="ECO:0007669"/>
    <property type="project" value="UniProtKB-KW"/>
</dbReference>
<dbReference type="GO" id="GO:0006285">
    <property type="term" value="P:base-excision repair, AP site formation"/>
    <property type="evidence" value="ECO:0000318"/>
    <property type="project" value="GO_Central"/>
</dbReference>
<dbReference type="CDD" id="cd00056">
    <property type="entry name" value="ENDO3c"/>
    <property type="match status" value="1"/>
</dbReference>
<dbReference type="FunFam" id="1.10.1670.10:FF:000001">
    <property type="entry name" value="Endonuclease III"/>
    <property type="match status" value="1"/>
</dbReference>
<dbReference type="FunFam" id="1.10.340.30:FF:000001">
    <property type="entry name" value="Endonuclease III"/>
    <property type="match status" value="1"/>
</dbReference>
<dbReference type="Gene3D" id="1.10.1670.10">
    <property type="entry name" value="Helix-hairpin-Helix base-excision DNA repair enzymes (C-terminal)"/>
    <property type="match status" value="1"/>
</dbReference>
<dbReference type="Gene3D" id="1.10.340.30">
    <property type="entry name" value="Hypothetical protein, domain 2"/>
    <property type="match status" value="1"/>
</dbReference>
<dbReference type="HAMAP" id="MF_00942">
    <property type="entry name" value="Nth"/>
    <property type="match status" value="1"/>
</dbReference>
<dbReference type="InterPro" id="IPR011257">
    <property type="entry name" value="DNA_glycosylase"/>
</dbReference>
<dbReference type="InterPro" id="IPR004036">
    <property type="entry name" value="Endonuclease-III-like_CS2"/>
</dbReference>
<dbReference type="InterPro" id="IPR003651">
    <property type="entry name" value="Endonuclease3_FeS-loop_motif"/>
</dbReference>
<dbReference type="InterPro" id="IPR004035">
    <property type="entry name" value="Endouclease-III_FeS-bd_BS"/>
</dbReference>
<dbReference type="InterPro" id="IPR003265">
    <property type="entry name" value="HhH-GPD_domain"/>
</dbReference>
<dbReference type="InterPro" id="IPR023170">
    <property type="entry name" value="HhH_base_excis_C"/>
</dbReference>
<dbReference type="InterPro" id="IPR000445">
    <property type="entry name" value="HhH_motif"/>
</dbReference>
<dbReference type="InterPro" id="IPR005759">
    <property type="entry name" value="Nth"/>
</dbReference>
<dbReference type="NCBIfam" id="TIGR01083">
    <property type="entry name" value="nth"/>
    <property type="match status" value="1"/>
</dbReference>
<dbReference type="PANTHER" id="PTHR10359">
    <property type="entry name" value="A/G-SPECIFIC ADENINE GLYCOSYLASE/ENDONUCLEASE III"/>
    <property type="match status" value="1"/>
</dbReference>
<dbReference type="PANTHER" id="PTHR10359:SF18">
    <property type="entry name" value="ENDONUCLEASE III"/>
    <property type="match status" value="1"/>
</dbReference>
<dbReference type="Pfam" id="PF10576">
    <property type="entry name" value="EndIII_4Fe-2S"/>
    <property type="match status" value="1"/>
</dbReference>
<dbReference type="Pfam" id="PF00633">
    <property type="entry name" value="HHH"/>
    <property type="match status" value="1"/>
</dbReference>
<dbReference type="Pfam" id="PF00730">
    <property type="entry name" value="HhH-GPD"/>
    <property type="match status" value="1"/>
</dbReference>
<dbReference type="PIRSF" id="PIRSF001435">
    <property type="entry name" value="Nth"/>
    <property type="match status" value="1"/>
</dbReference>
<dbReference type="SMART" id="SM00478">
    <property type="entry name" value="ENDO3c"/>
    <property type="match status" value="1"/>
</dbReference>
<dbReference type="SMART" id="SM00525">
    <property type="entry name" value="FES"/>
    <property type="match status" value="1"/>
</dbReference>
<dbReference type="SUPFAM" id="SSF48150">
    <property type="entry name" value="DNA-glycosylase"/>
    <property type="match status" value="1"/>
</dbReference>
<dbReference type="PROSITE" id="PS00764">
    <property type="entry name" value="ENDONUCLEASE_III_1"/>
    <property type="match status" value="1"/>
</dbReference>
<dbReference type="PROSITE" id="PS01155">
    <property type="entry name" value="ENDONUCLEASE_III_2"/>
    <property type="match status" value="1"/>
</dbReference>
<comment type="function">
    <text evidence="1">DNA repair enzyme that has both DNA N-glycosylase activity and AP-lyase activity. The DNA N-glycosylase activity releases various damaged pyrimidines from DNA by cleaving the N-glycosidic bond, leaving an AP (apurinic/apyrimidinic) site. The AP-lyase activity cleaves the phosphodiester bond 3' to the AP site by a beta-elimination, leaving a 3'-terminal unsaturated sugar and a product with a terminal 5'-phosphate.</text>
</comment>
<comment type="catalytic activity">
    <reaction evidence="1">
        <text>2'-deoxyribonucleotide-(2'-deoxyribose 5'-phosphate)-2'-deoxyribonucleotide-DNA = a 3'-end 2'-deoxyribonucleotide-(2,3-dehydro-2,3-deoxyribose 5'-phosphate)-DNA + a 5'-end 5'-phospho-2'-deoxyribonucleoside-DNA + H(+)</text>
        <dbReference type="Rhea" id="RHEA:66592"/>
        <dbReference type="Rhea" id="RHEA-COMP:13180"/>
        <dbReference type="Rhea" id="RHEA-COMP:16897"/>
        <dbReference type="Rhea" id="RHEA-COMP:17067"/>
        <dbReference type="ChEBI" id="CHEBI:15378"/>
        <dbReference type="ChEBI" id="CHEBI:136412"/>
        <dbReference type="ChEBI" id="CHEBI:157695"/>
        <dbReference type="ChEBI" id="CHEBI:167181"/>
        <dbReference type="EC" id="4.2.99.18"/>
    </reaction>
</comment>
<comment type="cofactor">
    <cofactor evidence="1">
        <name>[4Fe-4S] cluster</name>
        <dbReference type="ChEBI" id="CHEBI:49883"/>
    </cofactor>
    <text evidence="1">Binds 1 [4Fe-4S] cluster.</text>
</comment>
<comment type="similarity">
    <text evidence="1">Belongs to the Nth/MutY family.</text>
</comment>
<name>END3_SYNY3</name>